<keyword id="KW-0004">4Fe-4S</keyword>
<keyword id="KW-0408">Iron</keyword>
<keyword id="KW-0411">Iron-sulfur</keyword>
<keyword id="KW-0414">Isoprene biosynthesis</keyword>
<keyword id="KW-0479">Metal-binding</keyword>
<keyword id="KW-0560">Oxidoreductase</keyword>
<keyword id="KW-1185">Reference proteome</keyword>
<protein>
    <recommendedName>
        <fullName evidence="1">4-hydroxy-3-methylbut-2-enyl diphosphate reductase</fullName>
        <shortName evidence="1">HMBPP reductase</shortName>
        <ecNumber evidence="1">1.17.7.4</ecNumber>
    </recommendedName>
</protein>
<reference key="1">
    <citation type="journal article" date="2003" name="Science">
        <title>Genome of Geobacter sulfurreducens: metal reduction in subsurface environments.</title>
        <authorList>
            <person name="Methe B.A."/>
            <person name="Nelson K.E."/>
            <person name="Eisen J.A."/>
            <person name="Paulsen I.T."/>
            <person name="Nelson W.C."/>
            <person name="Heidelberg J.F."/>
            <person name="Wu D."/>
            <person name="Wu M."/>
            <person name="Ward N.L."/>
            <person name="Beanan M.J."/>
            <person name="Dodson R.J."/>
            <person name="Madupu R."/>
            <person name="Brinkac L.M."/>
            <person name="Daugherty S.C."/>
            <person name="DeBoy R.T."/>
            <person name="Durkin A.S."/>
            <person name="Gwinn M.L."/>
            <person name="Kolonay J.F."/>
            <person name="Sullivan S.A."/>
            <person name="Haft D.H."/>
            <person name="Selengut J."/>
            <person name="Davidsen T.M."/>
            <person name="Zafar N."/>
            <person name="White O."/>
            <person name="Tran B."/>
            <person name="Romero C."/>
            <person name="Forberger H.A."/>
            <person name="Weidman J.F."/>
            <person name="Khouri H.M."/>
            <person name="Feldblyum T.V."/>
            <person name="Utterback T.R."/>
            <person name="Van Aken S.E."/>
            <person name="Lovley D.R."/>
            <person name="Fraser C.M."/>
        </authorList>
    </citation>
    <scope>NUCLEOTIDE SEQUENCE [LARGE SCALE GENOMIC DNA]</scope>
    <source>
        <strain>ATCC 51573 / DSM 12127 / PCA</strain>
    </source>
</reference>
<proteinExistence type="inferred from homology"/>
<comment type="function">
    <text evidence="1">Catalyzes the conversion of 1-hydroxy-2-methyl-2-(E)-butenyl 4-diphosphate (HMBPP) into a mixture of isopentenyl diphosphate (IPP) and dimethylallyl diphosphate (DMAPP). Acts in the terminal step of the DOXP/MEP pathway for isoprenoid precursor biosynthesis.</text>
</comment>
<comment type="catalytic activity">
    <reaction evidence="1">
        <text>isopentenyl diphosphate + 2 oxidized [2Fe-2S]-[ferredoxin] + H2O = (2E)-4-hydroxy-3-methylbut-2-enyl diphosphate + 2 reduced [2Fe-2S]-[ferredoxin] + 2 H(+)</text>
        <dbReference type="Rhea" id="RHEA:24488"/>
        <dbReference type="Rhea" id="RHEA-COMP:10000"/>
        <dbReference type="Rhea" id="RHEA-COMP:10001"/>
        <dbReference type="ChEBI" id="CHEBI:15377"/>
        <dbReference type="ChEBI" id="CHEBI:15378"/>
        <dbReference type="ChEBI" id="CHEBI:33737"/>
        <dbReference type="ChEBI" id="CHEBI:33738"/>
        <dbReference type="ChEBI" id="CHEBI:128753"/>
        <dbReference type="ChEBI" id="CHEBI:128769"/>
        <dbReference type="EC" id="1.17.7.4"/>
    </reaction>
</comment>
<comment type="catalytic activity">
    <reaction evidence="1">
        <text>dimethylallyl diphosphate + 2 oxidized [2Fe-2S]-[ferredoxin] + H2O = (2E)-4-hydroxy-3-methylbut-2-enyl diphosphate + 2 reduced [2Fe-2S]-[ferredoxin] + 2 H(+)</text>
        <dbReference type="Rhea" id="RHEA:24825"/>
        <dbReference type="Rhea" id="RHEA-COMP:10000"/>
        <dbReference type="Rhea" id="RHEA-COMP:10001"/>
        <dbReference type="ChEBI" id="CHEBI:15377"/>
        <dbReference type="ChEBI" id="CHEBI:15378"/>
        <dbReference type="ChEBI" id="CHEBI:33737"/>
        <dbReference type="ChEBI" id="CHEBI:33738"/>
        <dbReference type="ChEBI" id="CHEBI:57623"/>
        <dbReference type="ChEBI" id="CHEBI:128753"/>
        <dbReference type="EC" id="1.17.7.4"/>
    </reaction>
</comment>
<comment type="cofactor">
    <cofactor evidence="1">
        <name>[4Fe-4S] cluster</name>
        <dbReference type="ChEBI" id="CHEBI:49883"/>
    </cofactor>
    <text evidence="1">Binds 1 [4Fe-4S] cluster per subunit.</text>
</comment>
<comment type="pathway">
    <text evidence="1">Isoprenoid biosynthesis; dimethylallyl diphosphate biosynthesis; dimethylallyl diphosphate from (2E)-4-hydroxy-3-methylbutenyl diphosphate: step 1/1.</text>
</comment>
<comment type="pathway">
    <text evidence="1">Isoprenoid biosynthesis; isopentenyl diphosphate biosynthesis via DXP pathway; isopentenyl diphosphate from 1-deoxy-D-xylulose 5-phosphate: step 6/6.</text>
</comment>
<comment type="similarity">
    <text evidence="1">Belongs to the IspH family.</text>
</comment>
<sequence length="282" mass="30702">MEIVLAKRAGFCFGVKRATQMAFEAAEKEGETFTLGPIIHSPQVVQRLEGMGVKVLSDLEGIGNGTVIIRSHGVTSAELEDAVRRQLEVVDATCPFVKKAQEHVKRLSHDGYTVVVVGDADHPEVQGIVSYAEGPVHVVGSGEEAARLPNMKKVGVVAQTTQSFETLKNVVKECLLKGGEIRVFNTICDATAVRQDEAKALAREVDCMIVIGGFNSANTKRLAEVCSELQPRTYHIETAQELDASWFQGVERVGVTAGASTPKWLIDEVIERIQEFDNKKKG</sequence>
<evidence type="ECO:0000255" key="1">
    <source>
        <dbReference type="HAMAP-Rule" id="MF_00191"/>
    </source>
</evidence>
<feature type="chain" id="PRO_0000128820" description="4-hydroxy-3-methylbut-2-enyl diphosphate reductase">
    <location>
        <begin position="1"/>
        <end position="282"/>
    </location>
</feature>
<feature type="active site" description="Proton donor" evidence="1">
    <location>
        <position position="124"/>
    </location>
</feature>
<feature type="binding site" evidence="1">
    <location>
        <position position="12"/>
    </location>
    <ligand>
        <name>[4Fe-4S] cluster</name>
        <dbReference type="ChEBI" id="CHEBI:49883"/>
    </ligand>
</feature>
<feature type="binding site" evidence="1">
    <location>
        <position position="40"/>
    </location>
    <ligand>
        <name>(2E)-4-hydroxy-3-methylbut-2-enyl diphosphate</name>
        <dbReference type="ChEBI" id="CHEBI:128753"/>
    </ligand>
</feature>
<feature type="binding site" evidence="1">
    <location>
        <position position="40"/>
    </location>
    <ligand>
        <name>dimethylallyl diphosphate</name>
        <dbReference type="ChEBI" id="CHEBI:57623"/>
    </ligand>
</feature>
<feature type="binding site" evidence="1">
    <location>
        <position position="40"/>
    </location>
    <ligand>
        <name>isopentenyl diphosphate</name>
        <dbReference type="ChEBI" id="CHEBI:128769"/>
    </ligand>
</feature>
<feature type="binding site" evidence="1">
    <location>
        <position position="72"/>
    </location>
    <ligand>
        <name>(2E)-4-hydroxy-3-methylbut-2-enyl diphosphate</name>
        <dbReference type="ChEBI" id="CHEBI:128753"/>
    </ligand>
</feature>
<feature type="binding site" evidence="1">
    <location>
        <position position="72"/>
    </location>
    <ligand>
        <name>dimethylallyl diphosphate</name>
        <dbReference type="ChEBI" id="CHEBI:57623"/>
    </ligand>
</feature>
<feature type="binding site" evidence="1">
    <location>
        <position position="72"/>
    </location>
    <ligand>
        <name>isopentenyl diphosphate</name>
        <dbReference type="ChEBI" id="CHEBI:128769"/>
    </ligand>
</feature>
<feature type="binding site" evidence="1">
    <location>
        <position position="94"/>
    </location>
    <ligand>
        <name>[4Fe-4S] cluster</name>
        <dbReference type="ChEBI" id="CHEBI:49883"/>
    </ligand>
</feature>
<feature type="binding site" evidence="1">
    <location>
        <position position="122"/>
    </location>
    <ligand>
        <name>(2E)-4-hydroxy-3-methylbut-2-enyl diphosphate</name>
        <dbReference type="ChEBI" id="CHEBI:128753"/>
    </ligand>
</feature>
<feature type="binding site" evidence="1">
    <location>
        <position position="122"/>
    </location>
    <ligand>
        <name>dimethylallyl diphosphate</name>
        <dbReference type="ChEBI" id="CHEBI:57623"/>
    </ligand>
</feature>
<feature type="binding site" evidence="1">
    <location>
        <position position="122"/>
    </location>
    <ligand>
        <name>isopentenyl diphosphate</name>
        <dbReference type="ChEBI" id="CHEBI:128769"/>
    </ligand>
</feature>
<feature type="binding site" evidence="1">
    <location>
        <position position="160"/>
    </location>
    <ligand>
        <name>(2E)-4-hydroxy-3-methylbut-2-enyl diphosphate</name>
        <dbReference type="ChEBI" id="CHEBI:128753"/>
    </ligand>
</feature>
<feature type="binding site" evidence="1">
    <location>
        <position position="188"/>
    </location>
    <ligand>
        <name>[4Fe-4S] cluster</name>
        <dbReference type="ChEBI" id="CHEBI:49883"/>
    </ligand>
</feature>
<feature type="binding site" evidence="1">
    <location>
        <position position="216"/>
    </location>
    <ligand>
        <name>(2E)-4-hydroxy-3-methylbut-2-enyl diphosphate</name>
        <dbReference type="ChEBI" id="CHEBI:128753"/>
    </ligand>
</feature>
<feature type="binding site" evidence="1">
    <location>
        <position position="216"/>
    </location>
    <ligand>
        <name>dimethylallyl diphosphate</name>
        <dbReference type="ChEBI" id="CHEBI:57623"/>
    </ligand>
</feature>
<feature type="binding site" evidence="1">
    <location>
        <position position="216"/>
    </location>
    <ligand>
        <name>isopentenyl diphosphate</name>
        <dbReference type="ChEBI" id="CHEBI:128769"/>
    </ligand>
</feature>
<feature type="binding site" evidence="1">
    <location>
        <position position="218"/>
    </location>
    <ligand>
        <name>(2E)-4-hydroxy-3-methylbut-2-enyl diphosphate</name>
        <dbReference type="ChEBI" id="CHEBI:128753"/>
    </ligand>
</feature>
<feature type="binding site" evidence="1">
    <location>
        <position position="218"/>
    </location>
    <ligand>
        <name>dimethylallyl diphosphate</name>
        <dbReference type="ChEBI" id="CHEBI:57623"/>
    </ligand>
</feature>
<feature type="binding site" evidence="1">
    <location>
        <position position="218"/>
    </location>
    <ligand>
        <name>isopentenyl diphosphate</name>
        <dbReference type="ChEBI" id="CHEBI:128769"/>
    </ligand>
</feature>
<feature type="binding site" evidence="1">
    <location>
        <position position="260"/>
    </location>
    <ligand>
        <name>(2E)-4-hydroxy-3-methylbut-2-enyl diphosphate</name>
        <dbReference type="ChEBI" id="CHEBI:128753"/>
    </ligand>
</feature>
<feature type="binding site" evidence="1">
    <location>
        <position position="260"/>
    </location>
    <ligand>
        <name>dimethylallyl diphosphate</name>
        <dbReference type="ChEBI" id="CHEBI:57623"/>
    </ligand>
</feature>
<feature type="binding site" evidence="1">
    <location>
        <position position="260"/>
    </location>
    <ligand>
        <name>isopentenyl diphosphate</name>
        <dbReference type="ChEBI" id="CHEBI:128769"/>
    </ligand>
</feature>
<gene>
    <name evidence="1" type="primary">ispH</name>
    <name type="synonym">lytB</name>
    <name type="ordered locus">GSU2604</name>
</gene>
<organism>
    <name type="scientific">Geobacter sulfurreducens (strain ATCC 51573 / DSM 12127 / PCA)</name>
    <dbReference type="NCBI Taxonomy" id="243231"/>
    <lineage>
        <taxon>Bacteria</taxon>
        <taxon>Pseudomonadati</taxon>
        <taxon>Thermodesulfobacteriota</taxon>
        <taxon>Desulfuromonadia</taxon>
        <taxon>Geobacterales</taxon>
        <taxon>Geobacteraceae</taxon>
        <taxon>Geobacter</taxon>
    </lineage>
</organism>
<accession>Q749Y8</accession>
<dbReference type="EC" id="1.17.7.4" evidence="1"/>
<dbReference type="EMBL" id="AE017180">
    <property type="protein sequence ID" value="AAR35976.1"/>
    <property type="molecule type" value="Genomic_DNA"/>
</dbReference>
<dbReference type="RefSeq" id="NP_953649.1">
    <property type="nucleotide sequence ID" value="NC_002939.5"/>
</dbReference>
<dbReference type="RefSeq" id="WP_010943241.1">
    <property type="nucleotide sequence ID" value="NC_002939.5"/>
</dbReference>
<dbReference type="SMR" id="Q749Y8"/>
<dbReference type="FunCoup" id="Q749Y8">
    <property type="interactions" value="453"/>
</dbReference>
<dbReference type="STRING" id="243231.GSU2604"/>
<dbReference type="DNASU" id="2686313"/>
<dbReference type="EnsemblBacteria" id="AAR35976">
    <property type="protein sequence ID" value="AAR35976"/>
    <property type="gene ID" value="GSU2604"/>
</dbReference>
<dbReference type="KEGG" id="gsu:GSU2604"/>
<dbReference type="PATRIC" id="fig|243231.5.peg.2634"/>
<dbReference type="eggNOG" id="COG0761">
    <property type="taxonomic scope" value="Bacteria"/>
</dbReference>
<dbReference type="HOGENOM" id="CLU_027486_0_1_7"/>
<dbReference type="InParanoid" id="Q749Y8"/>
<dbReference type="OrthoDB" id="9804068at2"/>
<dbReference type="UniPathway" id="UPA00056">
    <property type="reaction ID" value="UER00097"/>
</dbReference>
<dbReference type="UniPathway" id="UPA00059">
    <property type="reaction ID" value="UER00105"/>
</dbReference>
<dbReference type="Proteomes" id="UP000000577">
    <property type="component" value="Chromosome"/>
</dbReference>
<dbReference type="GO" id="GO:0005829">
    <property type="term" value="C:cytosol"/>
    <property type="evidence" value="ECO:0000318"/>
    <property type="project" value="GO_Central"/>
</dbReference>
<dbReference type="GO" id="GO:0051539">
    <property type="term" value="F:4 iron, 4 sulfur cluster binding"/>
    <property type="evidence" value="ECO:0007669"/>
    <property type="project" value="UniProtKB-UniRule"/>
</dbReference>
<dbReference type="GO" id="GO:0051745">
    <property type="term" value="F:4-hydroxy-3-methylbut-2-enyl diphosphate reductase activity"/>
    <property type="evidence" value="ECO:0000318"/>
    <property type="project" value="GO_Central"/>
</dbReference>
<dbReference type="GO" id="GO:0046872">
    <property type="term" value="F:metal ion binding"/>
    <property type="evidence" value="ECO:0007669"/>
    <property type="project" value="UniProtKB-KW"/>
</dbReference>
<dbReference type="GO" id="GO:0050992">
    <property type="term" value="P:dimethylallyl diphosphate biosynthetic process"/>
    <property type="evidence" value="ECO:0007669"/>
    <property type="project" value="UniProtKB-UniRule"/>
</dbReference>
<dbReference type="GO" id="GO:0019288">
    <property type="term" value="P:isopentenyl diphosphate biosynthetic process, methylerythritol 4-phosphate pathway"/>
    <property type="evidence" value="ECO:0000318"/>
    <property type="project" value="GO_Central"/>
</dbReference>
<dbReference type="GO" id="GO:0016114">
    <property type="term" value="P:terpenoid biosynthetic process"/>
    <property type="evidence" value="ECO:0007669"/>
    <property type="project" value="UniProtKB-UniRule"/>
</dbReference>
<dbReference type="CDD" id="cd13944">
    <property type="entry name" value="lytB_ispH"/>
    <property type="match status" value="1"/>
</dbReference>
<dbReference type="Gene3D" id="3.40.50.11270">
    <property type="match status" value="1"/>
</dbReference>
<dbReference type="Gene3D" id="3.40.1010.20">
    <property type="entry name" value="4-hydroxy-3-methylbut-2-enyl diphosphate reductase, catalytic domain"/>
    <property type="match status" value="2"/>
</dbReference>
<dbReference type="HAMAP" id="MF_00191">
    <property type="entry name" value="IspH"/>
    <property type="match status" value="1"/>
</dbReference>
<dbReference type="InterPro" id="IPR003451">
    <property type="entry name" value="LytB/IspH"/>
</dbReference>
<dbReference type="NCBIfam" id="TIGR00216">
    <property type="entry name" value="ispH_lytB"/>
    <property type="match status" value="1"/>
</dbReference>
<dbReference type="NCBIfam" id="NF002187">
    <property type="entry name" value="PRK01045.1-1"/>
    <property type="match status" value="1"/>
</dbReference>
<dbReference type="PANTHER" id="PTHR30426">
    <property type="entry name" value="4-HYDROXY-3-METHYLBUT-2-ENYL DIPHOSPHATE REDUCTASE"/>
    <property type="match status" value="1"/>
</dbReference>
<dbReference type="PANTHER" id="PTHR30426:SF0">
    <property type="entry name" value="4-HYDROXY-3-METHYLBUT-2-ENYL DIPHOSPHATE REDUCTASE"/>
    <property type="match status" value="1"/>
</dbReference>
<dbReference type="Pfam" id="PF02401">
    <property type="entry name" value="LYTB"/>
    <property type="match status" value="1"/>
</dbReference>
<name>ISPH_GEOSL</name>